<feature type="chain" id="PRO_0000448238" description="Transcription factor MYB1">
    <location>
        <begin position="1"/>
        <end position="248"/>
    </location>
</feature>
<feature type="domain" description="HTH myb-type 1" evidence="1">
    <location>
        <begin position="9"/>
        <end position="61"/>
    </location>
</feature>
<feature type="domain" description="HTH myb-type 2" evidence="1">
    <location>
        <begin position="62"/>
        <end position="116"/>
    </location>
</feature>
<feature type="DNA-binding region" description="H-T-H motif" evidence="1">
    <location>
        <begin position="37"/>
        <end position="61"/>
    </location>
</feature>
<feature type="DNA-binding region" description="H-T-H motif" evidence="1">
    <location>
        <begin position="89"/>
        <end position="112"/>
    </location>
</feature>
<feature type="region of interest" description="Disordered" evidence="2">
    <location>
        <begin position="118"/>
        <end position="144"/>
    </location>
</feature>
<reference key="1">
    <citation type="journal article" date="2019" name="Plant Physiol.">
        <title>Flavonol biosynthesis genes and their use in engineering the plant antidiabetic metabolite montbretin A.</title>
        <authorList>
            <person name="Irmisch S."/>
            <person name="Ruebsam H."/>
            <person name="Jancsik S."/>
            <person name="Man Saint Yuen M."/>
            <person name="Madilao L.L."/>
            <person name="Bohlmann J."/>
        </authorList>
    </citation>
    <scope>NUCLEOTIDE SEQUENCE [MRNA]</scope>
    <scope>FUNCTION</scope>
</reference>
<dbReference type="EMBL" id="MK562525">
    <property type="protein sequence ID" value="QCF41220.1"/>
    <property type="molecule type" value="mRNA"/>
</dbReference>
<dbReference type="SMR" id="A0A4D6Q411"/>
<dbReference type="GO" id="GO:0005634">
    <property type="term" value="C:nucleus"/>
    <property type="evidence" value="ECO:0007669"/>
    <property type="project" value="UniProtKB-SubCell"/>
</dbReference>
<dbReference type="GO" id="GO:0003677">
    <property type="term" value="F:DNA binding"/>
    <property type="evidence" value="ECO:0007669"/>
    <property type="project" value="UniProtKB-KW"/>
</dbReference>
<dbReference type="CDD" id="cd00167">
    <property type="entry name" value="SANT"/>
    <property type="match status" value="2"/>
</dbReference>
<dbReference type="FunFam" id="1.10.10.60:FF:000001">
    <property type="entry name" value="MYB-related transcription factor"/>
    <property type="match status" value="1"/>
</dbReference>
<dbReference type="FunFam" id="1.10.10.60:FF:000302">
    <property type="entry name" value="Transcription factor TT2"/>
    <property type="match status" value="1"/>
</dbReference>
<dbReference type="Gene3D" id="1.10.10.60">
    <property type="entry name" value="Homeodomain-like"/>
    <property type="match status" value="2"/>
</dbReference>
<dbReference type="InterPro" id="IPR009057">
    <property type="entry name" value="Homeodomain-like_sf"/>
</dbReference>
<dbReference type="InterPro" id="IPR017930">
    <property type="entry name" value="Myb_dom"/>
</dbReference>
<dbReference type="InterPro" id="IPR015495">
    <property type="entry name" value="Myb_TF_plants"/>
</dbReference>
<dbReference type="InterPro" id="IPR001005">
    <property type="entry name" value="SANT/Myb"/>
</dbReference>
<dbReference type="PANTHER" id="PTHR47999:SF86">
    <property type="entry name" value="MYB-RELATED PROTEIN MYB4-LIKE"/>
    <property type="match status" value="1"/>
</dbReference>
<dbReference type="PANTHER" id="PTHR47999">
    <property type="entry name" value="TRANSCRIPTION FACTOR MYB8-RELATED-RELATED"/>
    <property type="match status" value="1"/>
</dbReference>
<dbReference type="Pfam" id="PF00249">
    <property type="entry name" value="Myb_DNA-binding"/>
    <property type="match status" value="2"/>
</dbReference>
<dbReference type="SMART" id="SM00717">
    <property type="entry name" value="SANT"/>
    <property type="match status" value="2"/>
</dbReference>
<dbReference type="SUPFAM" id="SSF46689">
    <property type="entry name" value="Homeodomain-like"/>
    <property type="match status" value="1"/>
</dbReference>
<dbReference type="PROSITE" id="PS51294">
    <property type="entry name" value="HTH_MYB"/>
    <property type="match status" value="2"/>
</dbReference>
<comment type="function">
    <text evidence="3">Transcription activator involved in the spatiotemporal regulation of flavonoid biosynthesis specifically in the corms of Montbretia (PubMed:31004005). Activates the promoters of enzymes involved in the biosynthesis of the flavonol kaempferol and the flavonol-glycoside kaempferol-rhamnoside (PubMed:31004005).</text>
</comment>
<comment type="subcellular location">
    <subcellularLocation>
        <location evidence="1">Nucleus</location>
    </subcellularLocation>
</comment>
<proteinExistence type="evidence at transcript level"/>
<evidence type="ECO:0000255" key="1">
    <source>
        <dbReference type="PROSITE-ProRule" id="PRU00625"/>
    </source>
</evidence>
<evidence type="ECO:0000256" key="2">
    <source>
        <dbReference type="SAM" id="MobiDB-lite"/>
    </source>
</evidence>
<evidence type="ECO:0000269" key="3">
    <source>
    </source>
</evidence>
<evidence type="ECO:0000303" key="4">
    <source>
    </source>
</evidence>
<evidence type="ECO:0000305" key="5"/>
<name>MYB1_CROXC</name>
<protein>
    <recommendedName>
        <fullName evidence="5">Transcription factor MYB1</fullName>
    </recommendedName>
    <alternativeName>
        <fullName evidence="4">Myb-related protein 1</fullName>
        <shortName evidence="4">CcMYB1</shortName>
    </alternativeName>
</protein>
<keyword id="KW-0010">Activator</keyword>
<keyword id="KW-0238">DNA-binding</keyword>
<keyword id="KW-0539">Nucleus</keyword>
<keyword id="KW-0677">Repeat</keyword>
<keyword id="KW-0804">Transcription</keyword>
<keyword id="KW-0805">Transcription regulation</keyword>
<sequence length="248" mass="27709">MGRKPCCSKEGMNRGAWASMEDKILVTYIKTHGEGKWRSLPKRAGLKRCGKSCRLRWLNYLRPGIKRGNISEDEEDLIIRLHNLLGNRWSLIAGRLPGRTDNEIKNYWNTNLGRRVHDQSHQHCRPNPTITSTKPADAPPANANTVATMPVRTKAARCTRAFFSDDLSDQKEVAANNDGLDNKKEEFDAVGSIGPLLQENVGNAVGEDTNIDMAVSLDSLLLFDSFQVDDGINLQSMAALLDSEDQWF</sequence>
<organism>
    <name type="scientific">Crocosmia x crocosmiiflora</name>
    <name type="common">Montbretia</name>
    <name type="synonym">Crocosmia aurea x Crocosmia pottsii</name>
    <dbReference type="NCBI Taxonomy" id="1053288"/>
    <lineage>
        <taxon>Eukaryota</taxon>
        <taxon>Viridiplantae</taxon>
        <taxon>Streptophyta</taxon>
        <taxon>Embryophyta</taxon>
        <taxon>Tracheophyta</taxon>
        <taxon>Spermatophyta</taxon>
        <taxon>Magnoliopsida</taxon>
        <taxon>Liliopsida</taxon>
        <taxon>Asparagales</taxon>
        <taxon>Iridaceae</taxon>
        <taxon>Crocoideae</taxon>
        <taxon>Freesieae</taxon>
        <taxon>Crocosmia</taxon>
    </lineage>
</organism>
<accession>A0A4D6Q411</accession>
<gene>
    <name evidence="4" type="primary">MYB1</name>
</gene>